<evidence type="ECO:0000255" key="1">
    <source>
        <dbReference type="HAMAP-Rule" id="MF_00473"/>
    </source>
</evidence>
<evidence type="ECO:0000305" key="2"/>
<protein>
    <recommendedName>
        <fullName evidence="1">Glucose-6-phosphate isomerase</fullName>
        <shortName evidence="1">GPI</shortName>
        <ecNumber evidence="1">5.3.1.9</ecNumber>
    </recommendedName>
    <alternativeName>
        <fullName evidence="1">Phosphoglucose isomerase</fullName>
        <shortName evidence="1">PGI</shortName>
    </alternativeName>
    <alternativeName>
        <fullName evidence="1">Phosphohexose isomerase</fullName>
        <shortName evidence="1">PHI</shortName>
    </alternativeName>
</protein>
<organism>
    <name type="scientific">Escherichia coli (strain UTI89 / UPEC)</name>
    <dbReference type="NCBI Taxonomy" id="364106"/>
    <lineage>
        <taxon>Bacteria</taxon>
        <taxon>Pseudomonadati</taxon>
        <taxon>Pseudomonadota</taxon>
        <taxon>Gammaproteobacteria</taxon>
        <taxon>Enterobacterales</taxon>
        <taxon>Enterobacteriaceae</taxon>
        <taxon>Escherichia</taxon>
    </lineage>
</organism>
<reference key="1">
    <citation type="journal article" date="2006" name="Proc. Natl. Acad. Sci. U.S.A.">
        <title>Identification of genes subject to positive selection in uropathogenic strains of Escherichia coli: a comparative genomics approach.</title>
        <authorList>
            <person name="Chen S.L."/>
            <person name="Hung C.-S."/>
            <person name="Xu J."/>
            <person name="Reigstad C.S."/>
            <person name="Magrini V."/>
            <person name="Sabo A."/>
            <person name="Blasiar D."/>
            <person name="Bieri T."/>
            <person name="Meyer R.R."/>
            <person name="Ozersky P."/>
            <person name="Armstrong J.R."/>
            <person name="Fulton R.S."/>
            <person name="Latreille J.P."/>
            <person name="Spieth J."/>
            <person name="Hooton T.M."/>
            <person name="Mardis E.R."/>
            <person name="Hultgren S.J."/>
            <person name="Gordon J.I."/>
        </authorList>
    </citation>
    <scope>NUCLEOTIDE SEQUENCE [LARGE SCALE GENOMIC DNA]</scope>
    <source>
        <strain>UTI89 / UPEC</strain>
    </source>
</reference>
<feature type="chain" id="PRO_0000252619" description="Glucose-6-phosphate isomerase">
    <location>
        <begin position="1"/>
        <end position="549"/>
    </location>
</feature>
<feature type="active site" description="Proton donor" evidence="1">
    <location>
        <position position="355"/>
    </location>
</feature>
<feature type="active site" evidence="1">
    <location>
        <position position="386"/>
    </location>
</feature>
<feature type="active site" evidence="1">
    <location>
        <position position="514"/>
    </location>
</feature>
<feature type="modified residue" description="N6-acetyllysine" evidence="1">
    <location>
        <position position="80"/>
    </location>
</feature>
<feature type="modified residue" description="N6-acetyllysine" evidence="1">
    <location>
        <position position="228"/>
    </location>
</feature>
<feature type="modified residue" description="N6-acetyllysine" evidence="1">
    <location>
        <position position="234"/>
    </location>
</feature>
<gene>
    <name evidence="1" type="primary">pgi</name>
    <name type="ordered locus">UTI89_C4593</name>
</gene>
<name>G6PI_ECOUT</name>
<keyword id="KW-0007">Acetylation</keyword>
<keyword id="KW-0963">Cytoplasm</keyword>
<keyword id="KW-0312">Gluconeogenesis</keyword>
<keyword id="KW-0324">Glycolysis</keyword>
<keyword id="KW-0413">Isomerase</keyword>
<dbReference type="EC" id="5.3.1.9" evidence="1"/>
<dbReference type="EMBL" id="CP000243">
    <property type="protein sequence ID" value="ABE10001.1"/>
    <property type="status" value="ALT_INIT"/>
    <property type="molecule type" value="Genomic_DNA"/>
</dbReference>
<dbReference type="RefSeq" id="WP_000789981.1">
    <property type="nucleotide sequence ID" value="NZ_CP064825.1"/>
</dbReference>
<dbReference type="SMR" id="Q1R3R3"/>
<dbReference type="KEGG" id="eci:UTI89_C4593"/>
<dbReference type="HOGENOM" id="CLU_017947_3_1_6"/>
<dbReference type="UniPathway" id="UPA00109">
    <property type="reaction ID" value="UER00181"/>
</dbReference>
<dbReference type="UniPathway" id="UPA00138"/>
<dbReference type="Proteomes" id="UP000001952">
    <property type="component" value="Chromosome"/>
</dbReference>
<dbReference type="GO" id="GO:0005829">
    <property type="term" value="C:cytosol"/>
    <property type="evidence" value="ECO:0007669"/>
    <property type="project" value="TreeGrafter"/>
</dbReference>
<dbReference type="GO" id="GO:0097367">
    <property type="term" value="F:carbohydrate derivative binding"/>
    <property type="evidence" value="ECO:0007669"/>
    <property type="project" value="InterPro"/>
</dbReference>
<dbReference type="GO" id="GO:0004347">
    <property type="term" value="F:glucose-6-phosphate isomerase activity"/>
    <property type="evidence" value="ECO:0007669"/>
    <property type="project" value="UniProtKB-UniRule"/>
</dbReference>
<dbReference type="GO" id="GO:0048029">
    <property type="term" value="F:monosaccharide binding"/>
    <property type="evidence" value="ECO:0007669"/>
    <property type="project" value="TreeGrafter"/>
</dbReference>
<dbReference type="GO" id="GO:0006094">
    <property type="term" value="P:gluconeogenesis"/>
    <property type="evidence" value="ECO:0007669"/>
    <property type="project" value="UniProtKB-UniRule"/>
</dbReference>
<dbReference type="GO" id="GO:0051156">
    <property type="term" value="P:glucose 6-phosphate metabolic process"/>
    <property type="evidence" value="ECO:0007669"/>
    <property type="project" value="TreeGrafter"/>
</dbReference>
<dbReference type="GO" id="GO:0006096">
    <property type="term" value="P:glycolytic process"/>
    <property type="evidence" value="ECO:0007669"/>
    <property type="project" value="UniProtKB-UniRule"/>
</dbReference>
<dbReference type="CDD" id="cd05015">
    <property type="entry name" value="SIS_PGI_1"/>
    <property type="match status" value="1"/>
</dbReference>
<dbReference type="CDD" id="cd05016">
    <property type="entry name" value="SIS_PGI_2"/>
    <property type="match status" value="1"/>
</dbReference>
<dbReference type="FunFam" id="1.10.1390.10:FF:000001">
    <property type="entry name" value="Glucose-6-phosphate isomerase"/>
    <property type="match status" value="1"/>
</dbReference>
<dbReference type="FunFam" id="3.40.50.10490:FF:000004">
    <property type="entry name" value="Glucose-6-phosphate isomerase"/>
    <property type="match status" value="1"/>
</dbReference>
<dbReference type="Gene3D" id="1.10.1390.10">
    <property type="match status" value="1"/>
</dbReference>
<dbReference type="Gene3D" id="3.40.50.10490">
    <property type="entry name" value="Glucose-6-phosphate isomerase like protein, domain 1"/>
    <property type="match status" value="2"/>
</dbReference>
<dbReference type="HAMAP" id="MF_00473">
    <property type="entry name" value="G6P_isomerase"/>
    <property type="match status" value="1"/>
</dbReference>
<dbReference type="InterPro" id="IPR001672">
    <property type="entry name" value="G6P_Isomerase"/>
</dbReference>
<dbReference type="InterPro" id="IPR023096">
    <property type="entry name" value="G6P_Isomerase_C"/>
</dbReference>
<dbReference type="InterPro" id="IPR018189">
    <property type="entry name" value="Phosphoglucose_isomerase_CS"/>
</dbReference>
<dbReference type="InterPro" id="IPR046348">
    <property type="entry name" value="SIS_dom_sf"/>
</dbReference>
<dbReference type="InterPro" id="IPR035476">
    <property type="entry name" value="SIS_PGI_1"/>
</dbReference>
<dbReference type="InterPro" id="IPR035482">
    <property type="entry name" value="SIS_PGI_2"/>
</dbReference>
<dbReference type="NCBIfam" id="NF001211">
    <property type="entry name" value="PRK00179.1"/>
    <property type="match status" value="1"/>
</dbReference>
<dbReference type="PANTHER" id="PTHR11469">
    <property type="entry name" value="GLUCOSE-6-PHOSPHATE ISOMERASE"/>
    <property type="match status" value="1"/>
</dbReference>
<dbReference type="PANTHER" id="PTHR11469:SF1">
    <property type="entry name" value="GLUCOSE-6-PHOSPHATE ISOMERASE"/>
    <property type="match status" value="1"/>
</dbReference>
<dbReference type="Pfam" id="PF00342">
    <property type="entry name" value="PGI"/>
    <property type="match status" value="1"/>
</dbReference>
<dbReference type="PRINTS" id="PR00662">
    <property type="entry name" value="G6PISOMERASE"/>
</dbReference>
<dbReference type="SUPFAM" id="SSF53697">
    <property type="entry name" value="SIS domain"/>
    <property type="match status" value="1"/>
</dbReference>
<dbReference type="PROSITE" id="PS00765">
    <property type="entry name" value="P_GLUCOSE_ISOMERASE_1"/>
    <property type="match status" value="1"/>
</dbReference>
<dbReference type="PROSITE" id="PS00174">
    <property type="entry name" value="P_GLUCOSE_ISOMERASE_2"/>
    <property type="match status" value="1"/>
</dbReference>
<dbReference type="PROSITE" id="PS51463">
    <property type="entry name" value="P_GLUCOSE_ISOMERASE_3"/>
    <property type="match status" value="1"/>
</dbReference>
<proteinExistence type="inferred from homology"/>
<comment type="function">
    <text evidence="1">Catalyzes the reversible isomerization of glucose-6-phosphate to fructose-6-phosphate.</text>
</comment>
<comment type="catalytic activity">
    <reaction evidence="1">
        <text>alpha-D-glucose 6-phosphate = beta-D-fructose 6-phosphate</text>
        <dbReference type="Rhea" id="RHEA:11816"/>
        <dbReference type="ChEBI" id="CHEBI:57634"/>
        <dbReference type="ChEBI" id="CHEBI:58225"/>
        <dbReference type="EC" id="5.3.1.9"/>
    </reaction>
</comment>
<comment type="pathway">
    <text evidence="1">Carbohydrate biosynthesis; gluconeogenesis.</text>
</comment>
<comment type="pathway">
    <text evidence="1">Carbohydrate degradation; glycolysis; D-glyceraldehyde 3-phosphate and glycerone phosphate from D-glucose: step 2/4.</text>
</comment>
<comment type="subcellular location">
    <subcellularLocation>
        <location evidence="1">Cytoplasm</location>
    </subcellularLocation>
</comment>
<comment type="similarity">
    <text evidence="1">Belongs to the GPI family.</text>
</comment>
<comment type="sequence caution" evidence="2">
    <conflict type="erroneous initiation">
        <sequence resource="EMBL-CDS" id="ABE10001"/>
    </conflict>
</comment>
<accession>Q1R3R3</accession>
<sequence>MKNINPTQTAAWQALQKHFDEMKDVTIADLFAKDGDRFSKFSATFDDQMLVDYSKNRITEETLAKLQDLAKECDLAGAIKSMFSGEKINRTENRAVLHVALRNRSNTPILVDGKDVMPEVNAVLEKMKTFSEAIISGEWKGYTGKAITDVVNIGIGGSDLGPYMVTEALRPYKNHLNMHFVSNVDGTHIAEVLKKVNPETTLFLVASKTFTTQETMTNAHSARDWFLKAAGDEKHVAKHFAALSTNAKAVGEFGIDTANMFEFWDWVGGRYSLWSAIGLSIVLSIGFDNFVELLSGAHAMDKHFSTTPAEKNLPVLLALIGIWYNNFFGAETEAILPYDQYMHRFAAYFQQGNMESNGKYVDRNGKVVDYQTGPIIWGEPGTNGQHAFYQLIHQGTKMVPCDFIAPAITHNPLSDHHQKLLSNFFAQTEALAFGKSREVVEQEYRDQGKDPATLDYVVPFKVFEGNRPTNSILLREITPFSLGALIALYEHKIFTQGVILNIFTFDQWGVELGKQLANRILPELKDDKEISSHDSSTNGLINRYKAWRG</sequence>